<accession>H1UVH3</accession>
<accession>I2G7H1</accession>
<dbReference type="EMBL" id="CACQ02000282">
    <property type="protein sequence ID" value="CCF31974.1"/>
    <property type="molecule type" value="Genomic_DNA"/>
</dbReference>
<dbReference type="EMBL" id="LTAN01000004">
    <property type="protein sequence ID" value="OBR10321.1"/>
    <property type="molecule type" value="Genomic_DNA"/>
</dbReference>
<dbReference type="RefSeq" id="XP_018158838.1">
    <property type="nucleotide sequence ID" value="XM_018300988.1"/>
</dbReference>
<dbReference type="SMR" id="H1UVH3"/>
<dbReference type="STRING" id="759273.H1UVH3"/>
<dbReference type="GeneID" id="28865095"/>
<dbReference type="KEGG" id="chig:CH63R_06013"/>
<dbReference type="VEuPathDB" id="FungiDB:CH63R_06013"/>
<dbReference type="eggNOG" id="ENOG502SCJ7">
    <property type="taxonomic scope" value="Eukaryota"/>
</dbReference>
<dbReference type="OrthoDB" id="47973at1028384"/>
<dbReference type="Proteomes" id="UP000007174">
    <property type="component" value="Unassembled WGS sequence"/>
</dbReference>
<dbReference type="Proteomes" id="UP000092177">
    <property type="component" value="Chromosome 4"/>
</dbReference>
<dbReference type="GO" id="GO:0005576">
    <property type="term" value="C:extracellular region"/>
    <property type="evidence" value="ECO:0007669"/>
    <property type="project" value="UniProtKB-SubCell"/>
</dbReference>
<dbReference type="CDD" id="cd00118">
    <property type="entry name" value="LysM"/>
    <property type="match status" value="2"/>
</dbReference>
<dbReference type="Gene3D" id="3.10.350.10">
    <property type="entry name" value="LysM domain"/>
    <property type="match status" value="2"/>
</dbReference>
<dbReference type="InterPro" id="IPR018392">
    <property type="entry name" value="LysM_dom"/>
</dbReference>
<dbReference type="InterPro" id="IPR036779">
    <property type="entry name" value="LysM_dom_sf"/>
</dbReference>
<dbReference type="PANTHER" id="PTHR33734">
    <property type="entry name" value="LYSM DOMAIN-CONTAINING GPI-ANCHORED PROTEIN 2"/>
    <property type="match status" value="1"/>
</dbReference>
<dbReference type="PANTHER" id="PTHR33734:SF22">
    <property type="entry name" value="MEMBRANE-BOUND LYTIC MUREIN TRANSGLYCOSYLASE D"/>
    <property type="match status" value="1"/>
</dbReference>
<dbReference type="Pfam" id="PF01476">
    <property type="entry name" value="LysM"/>
    <property type="match status" value="2"/>
</dbReference>
<dbReference type="SMART" id="SM00257">
    <property type="entry name" value="LysM"/>
    <property type="match status" value="2"/>
</dbReference>
<dbReference type="SUPFAM" id="SSF54106">
    <property type="entry name" value="LysM domain"/>
    <property type="match status" value="2"/>
</dbReference>
<dbReference type="PROSITE" id="PS51782">
    <property type="entry name" value="LYSM"/>
    <property type="match status" value="2"/>
</dbReference>
<feature type="signal peptide" evidence="1">
    <location>
        <begin position="1"/>
        <end position="18"/>
    </location>
</feature>
<feature type="chain" id="PRO_5010497503" description="Secreted LysM effector ELP2">
    <location>
        <begin position="19"/>
        <end position="176"/>
    </location>
</feature>
<feature type="domain" description="LysM 1" evidence="3">
    <location>
        <begin position="58"/>
        <end position="102"/>
    </location>
</feature>
<feature type="domain" description="LysM 2" evidence="3">
    <location>
        <begin position="129"/>
        <end position="173"/>
    </location>
</feature>
<feature type="region of interest" description="Disordered" evidence="4">
    <location>
        <begin position="31"/>
        <end position="50"/>
    </location>
</feature>
<feature type="compositionally biased region" description="Low complexity" evidence="4">
    <location>
        <begin position="31"/>
        <end position="45"/>
    </location>
</feature>
<feature type="glycosylation site" description="N-linked (GlcNAc...) asparagine" evidence="2">
    <location>
        <position position="111"/>
    </location>
</feature>
<proteinExistence type="evidence at protein level"/>
<name>LYSM2_COLHI</name>
<organism>
    <name type="scientific">Colletotrichum higginsianum (strain IMI 349063)</name>
    <name type="common">Crucifer anthracnose fungus</name>
    <dbReference type="NCBI Taxonomy" id="759273"/>
    <lineage>
        <taxon>Eukaryota</taxon>
        <taxon>Fungi</taxon>
        <taxon>Dikarya</taxon>
        <taxon>Ascomycota</taxon>
        <taxon>Pezizomycotina</taxon>
        <taxon>Sordariomycetes</taxon>
        <taxon>Hypocreomycetidae</taxon>
        <taxon>Glomerellales</taxon>
        <taxon>Glomerellaceae</taxon>
        <taxon>Colletotrichum</taxon>
        <taxon>Colletotrichum destructivum species complex</taxon>
    </lineage>
</organism>
<sequence length="176" mass="17971">MQFSIFTVLAAAASFAVALPVCDATTTATTTSAAANPSPTTSGAANPSPTCGKLGDFHKTTVKAGQTLTTIAERFHSGICDIAWQNKLENPNVIFVGQVLLVPVNVCNPDNTSCLVPVGEATCVTGGPATYTIKSGDTFFAVAQSLGITTDSLTGANPGVVPENLQIDQVINVPVC</sequence>
<evidence type="ECO:0000255" key="1"/>
<evidence type="ECO:0000255" key="2">
    <source>
        <dbReference type="PROSITE-ProRule" id="PRU00498"/>
    </source>
</evidence>
<evidence type="ECO:0000255" key="3">
    <source>
        <dbReference type="PROSITE-ProRule" id="PRU01118"/>
    </source>
</evidence>
<evidence type="ECO:0000256" key="4">
    <source>
        <dbReference type="SAM" id="MobiDB-lite"/>
    </source>
</evidence>
<evidence type="ECO:0000269" key="5">
    <source>
    </source>
</evidence>
<evidence type="ECO:0000269" key="6">
    <source>
    </source>
</evidence>
<evidence type="ECO:0000303" key="7">
    <source>
    </source>
</evidence>
<evidence type="ECO:0000305" key="8"/>
<comment type="function">
    <text evidence="5 6">Secreted effector that enables the plant pathogenic fungus to manipulate host defenses for successful infection (PubMed:27174033). Binds chitin oligomers and polymer with high affinity and plays a dual role, not only in the suppression of chitin-triggered immune responses, but also in appressorium function (PubMed:27174033). Does not protect fungal hyphae against plant chitinases but suppresses chitin-triggered plant immune responses (PubMed:27174033). Chitin-induced polymerization of homodimers forms a contiguous ELP2 highly oligomeric super-complexe that may precipitate at infection sites to eliminate chitin oligomers, and thus suppress the activation of chitin-induced plant immunity (PubMed:35997573).</text>
</comment>
<comment type="subunit">
    <text evidence="6">Forms homodimers in a chitin-independent manner through interactions at the N-termini of EPL2 monomers (PubMed:35997573). Homodimers are further polymerized in a chitin-dependent manner (PubMed:35997573).</text>
</comment>
<comment type="subcellular location">
    <subcellularLocation>
        <location evidence="5">Secreted</location>
    </subcellularLocation>
    <text evidence="5">Accumulates at the plant-fungal interface.</text>
</comment>
<comment type="induction">
    <text evidence="5">Expression is induced during the initial intracellular biotrophic phase of infection.</text>
</comment>
<comment type="domain">
    <text evidence="5 6">The LysM (lysin motif) domains are small globular domains involved in binding chitin in eukaryotes. ELP2 contains 2 LysM domains.</text>
</comment>
<comment type="disruption phenotype">
    <text evidence="5">Impairs the penetration ability of appressoria in a plant-independent manner.</text>
</comment>
<comment type="miscellaneous">
    <text evidence="8">In plants, chitin acts as a microbe-associated molecular pattern (MAMP) that is recognized by lysin motif (LysM)-containing plant cell surface-localized pattern recognition receptors (PRRs) that activate a plethora of downstream immune responses.</text>
</comment>
<comment type="similarity">
    <text evidence="8">Belongs to the secreted LysM effector family.</text>
</comment>
<reference key="1">
    <citation type="submission" date="2011-12" db="EMBL/GenBank/DDBJ databases">
        <title>The genome sequence of Colletotrichum higginsianum IMI 34906.</title>
        <authorList>
            <person name="Ma L.-J."/>
            <person name="O'Connell R."/>
            <person name="van Themaat E.V.L."/>
            <person name="Stueber K."/>
            <person name="Young S.K."/>
            <person name="Zeng Q."/>
            <person name="Gargeya S."/>
            <person name="Fitzgerald M."/>
            <person name="Haas B."/>
            <person name="Abouelleil A."/>
            <person name="Alvarado L."/>
            <person name="Arachchi H.M."/>
            <person name="Berlin A."/>
            <person name="Chapman S.B."/>
            <person name="Gearin G."/>
            <person name="Goldberg J."/>
            <person name="Griggs A."/>
            <person name="Gujja S."/>
            <person name="Hansen M."/>
            <person name="Heiman D."/>
            <person name="Howarth C."/>
            <person name="Larimer J."/>
            <person name="Lui A."/>
            <person name="MacDonald P.J.P."/>
            <person name="McCowen C."/>
            <person name="Montmayeur A."/>
            <person name="Murphy C."/>
            <person name="Neiman D."/>
            <person name="Pearson M."/>
            <person name="Priest M."/>
            <person name="Roberts A."/>
            <person name="Saif S."/>
            <person name="Shea T."/>
            <person name="Sisk P."/>
            <person name="Stolte C."/>
            <person name="Sykes S."/>
            <person name="Wortman J."/>
            <person name="Nusbaum C."/>
            <person name="Birren B."/>
        </authorList>
    </citation>
    <scope>NUCLEOTIDE SEQUENCE [LARGE SCALE GENOMIC DNA]</scope>
    <source>
        <strain>IMI 349063</strain>
    </source>
</reference>
<reference key="2">
    <citation type="journal article" date="2012" name="Nat. Genet.">
        <title>Lifestyle transitions in plant pathogenic Colletotrichum fungi deciphered by genome and transcriptome analyses.</title>
        <authorList>
            <person name="O'Connell R.J."/>
            <person name="Thon M.R."/>
            <person name="Hacquard S."/>
            <person name="Amyotte S.G."/>
            <person name="Kleemann J."/>
            <person name="Torres M.F."/>
            <person name="Damm U."/>
            <person name="Buiate E.A."/>
            <person name="Epstein L."/>
            <person name="Alkan N."/>
            <person name="Altmueller J."/>
            <person name="Alvarado-Balderrama L."/>
            <person name="Bauser C.A."/>
            <person name="Becker C."/>
            <person name="Birren B.W."/>
            <person name="Chen Z."/>
            <person name="Choi J."/>
            <person name="Crouch J.A."/>
            <person name="Duvick J.P."/>
            <person name="Farman M.A."/>
            <person name="Gan P."/>
            <person name="Heiman D."/>
            <person name="Henrissat B."/>
            <person name="Howard R.J."/>
            <person name="Kabbage M."/>
            <person name="Koch C."/>
            <person name="Kracher B."/>
            <person name="Kubo Y."/>
            <person name="Law A.D."/>
            <person name="Lebrun M.-H."/>
            <person name="Lee Y.-H."/>
            <person name="Miyara I."/>
            <person name="Moore N."/>
            <person name="Neumann U."/>
            <person name="Nordstroem K."/>
            <person name="Panaccione D.G."/>
            <person name="Panstruga R."/>
            <person name="Place M."/>
            <person name="Proctor R.H."/>
            <person name="Prusky D."/>
            <person name="Rech G."/>
            <person name="Reinhardt R."/>
            <person name="Rollins J.A."/>
            <person name="Rounsley S."/>
            <person name="Schardl C.L."/>
            <person name="Schwartz D.C."/>
            <person name="Shenoy N."/>
            <person name="Shirasu K."/>
            <person name="Sikhakolli U.R."/>
            <person name="Stueber K."/>
            <person name="Sukno S.A."/>
            <person name="Sweigard J.A."/>
            <person name="Takano Y."/>
            <person name="Takahara H."/>
            <person name="Trail F."/>
            <person name="van der Does H.C."/>
            <person name="Voll L.M."/>
            <person name="Will I."/>
            <person name="Young S."/>
            <person name="Zeng Q."/>
            <person name="Zhang J."/>
            <person name="Zhou S."/>
            <person name="Dickman M.B."/>
            <person name="Schulze-Lefert P."/>
            <person name="Ver Loren van Themaat E."/>
            <person name="Ma L.-J."/>
            <person name="Vaillancourt L.J."/>
        </authorList>
    </citation>
    <scope>NUCLEOTIDE SEQUENCE [LARGE SCALE GENOMIC DNA]</scope>
    <source>
        <strain>IMI 349063</strain>
    </source>
</reference>
<reference key="3">
    <citation type="submission" date="2016-02" db="EMBL/GenBank/DDBJ databases">
        <title>Resequencing and annotation of the Colletotrichum higginsianum genome.</title>
        <authorList>
            <person name="O'Connell R."/>
            <person name="Zambounis A."/>
            <person name="Thon M."/>
            <person name="Dallery J.-F."/>
        </authorList>
    </citation>
    <scope>NUCLEOTIDE SEQUENCE [LARGE SCALE GENOMIC DNA]</scope>
    <source>
        <strain>IMI 349063</strain>
    </source>
</reference>
<reference key="4">
    <citation type="journal article" date="2017" name="BMC Genomics">
        <title>Gapless genome assembly of Colletotrichum higginsianum reveals chromosome structure and association of transposable elements with secondary metabolite gene clusters.</title>
        <authorList>
            <person name="Dallery J.-F."/>
            <person name="Lapalu N."/>
            <person name="Zampounis A."/>
            <person name="Pigne S."/>
            <person name="Luyten I."/>
            <person name="Amselem J."/>
            <person name="Wittenberg A.H.J."/>
            <person name="Zhou S."/>
            <person name="de Queiroz M.V."/>
            <person name="Robin G.P."/>
            <person name="Auger A."/>
            <person name="Hainaut M."/>
            <person name="Henrissat B."/>
            <person name="Kim K.-T."/>
            <person name="Lee Y.-H."/>
            <person name="Lespinet O."/>
            <person name="Schwartz D.C."/>
            <person name="Thon M.R."/>
            <person name="O'Connell R.J."/>
        </authorList>
    </citation>
    <scope>NUCLEOTIDE SEQUENCE [LARGE SCALE GENOMIC DNA]</scope>
    <source>
        <strain>IMI 349063</strain>
    </source>
</reference>
<reference key="5">
    <citation type="journal article" date="2016" name="New Phytol.">
        <title>Colletotrichum higginsianum extracellular LysM proteins play dual roles in appressorial function and suppression of chitin-triggered plant immunity.</title>
        <authorList>
            <person name="Takahara H."/>
            <person name="Hacquard S."/>
            <person name="Kombrink A."/>
            <person name="Hughes H.B."/>
            <person name="Halder V."/>
            <person name="Robin G.P."/>
            <person name="Hiruma K."/>
            <person name="Neumann U."/>
            <person name="Shinya T."/>
            <person name="Kombrink E."/>
            <person name="Shibuya N."/>
            <person name="Thomma B.P."/>
            <person name="O'Connell R.J."/>
        </authorList>
    </citation>
    <scope>FUNCTION</scope>
    <scope>INDUCTION</scope>
    <scope>DOMAIN</scope>
    <scope>CHITIN-BINDNG</scope>
    <scope>SUBCELLULAR LOCATION</scope>
    <scope>DISRUPTION PHENOTYPE</scope>
</reference>
<reference key="6">
    <citation type="journal article" date="2022" name="Plant Physiol.">
        <title>Fungal dual-domain LysM effectors undergo chitin-induced intermolecular, and not intramolecular, dimerization.</title>
        <authorList>
            <person name="Tian H."/>
            <person name="Fiorin G.L."/>
            <person name="Kombrink A."/>
            <person name="Mesters J.R."/>
            <person name="Thomma B.P.H.J."/>
        </authorList>
    </citation>
    <scope>FUNCTION</scope>
    <scope>DOMAIN</scope>
    <scope>SUBUNIT</scope>
</reference>
<gene>
    <name evidence="7" type="primary">ELP2</name>
    <name type="ORF">CH063_04445</name>
    <name type="ORF">CH63R_06013</name>
</gene>
<keyword id="KW-0325">Glycoprotein</keyword>
<keyword id="KW-1185">Reference proteome</keyword>
<keyword id="KW-0677">Repeat</keyword>
<keyword id="KW-0964">Secreted</keyword>
<keyword id="KW-0732">Signal</keyword>
<keyword id="KW-0843">Virulence</keyword>
<protein>
    <recommendedName>
        <fullName evidence="7">Secreted LysM effector ELP2</fullName>
    </recommendedName>
    <alternativeName>
        <fullName evidence="7">Extracellular LysM protein ELP2</fullName>
    </alternativeName>
    <alternativeName>
        <fullName evidence="7">LysM domain-containing protein 2</fullName>
    </alternativeName>
</protein>